<reference key="1">
    <citation type="journal article" date="2000" name="Mol. Phylogenet. Evol.">
        <title>Molecular systematics of pikas (genus Ochotona) inferred from mitochondrial DNA sequences.</title>
        <authorList>
            <person name="Yu N."/>
            <person name="Zheng C."/>
            <person name="Zhang Y.P."/>
            <person name="Li W.H."/>
        </authorList>
    </citation>
    <scope>NUCLEOTIDE SEQUENCE [GENOMIC DNA]</scope>
</reference>
<organism>
    <name type="scientific">Ochotona princeps</name>
    <name type="common">Southern American pika</name>
    <dbReference type="NCBI Taxonomy" id="9978"/>
    <lineage>
        <taxon>Eukaryota</taxon>
        <taxon>Metazoa</taxon>
        <taxon>Chordata</taxon>
        <taxon>Craniata</taxon>
        <taxon>Vertebrata</taxon>
        <taxon>Euteleostomi</taxon>
        <taxon>Mammalia</taxon>
        <taxon>Eutheria</taxon>
        <taxon>Euarchontoglires</taxon>
        <taxon>Glires</taxon>
        <taxon>Lagomorpha</taxon>
        <taxon>Ochotonidae</taxon>
        <taxon>Ochotona</taxon>
    </lineage>
</organism>
<name>CYB_OCHPR</name>
<evidence type="ECO:0000250" key="1"/>
<evidence type="ECO:0000250" key="2">
    <source>
        <dbReference type="UniProtKB" id="P00157"/>
    </source>
</evidence>
<evidence type="ECO:0000255" key="3">
    <source>
        <dbReference type="PROSITE-ProRule" id="PRU00967"/>
    </source>
</evidence>
<evidence type="ECO:0000255" key="4">
    <source>
        <dbReference type="PROSITE-ProRule" id="PRU00968"/>
    </source>
</evidence>
<gene>
    <name type="primary">MT-CYB</name>
    <name type="synonym">COB</name>
    <name type="synonym">CYTB</name>
    <name type="synonym">MTCYB</name>
</gene>
<proteinExistence type="inferred from homology"/>
<keyword id="KW-0249">Electron transport</keyword>
<keyword id="KW-0349">Heme</keyword>
<keyword id="KW-0408">Iron</keyword>
<keyword id="KW-0472">Membrane</keyword>
<keyword id="KW-0479">Metal-binding</keyword>
<keyword id="KW-0496">Mitochondrion</keyword>
<keyword id="KW-0999">Mitochondrion inner membrane</keyword>
<keyword id="KW-0679">Respiratory chain</keyword>
<keyword id="KW-0812">Transmembrane</keyword>
<keyword id="KW-1133">Transmembrane helix</keyword>
<keyword id="KW-0813">Transport</keyword>
<keyword id="KW-0830">Ubiquinone</keyword>
<accession>Q9GBZ4</accession>
<comment type="function">
    <text evidence="2">Component of the ubiquinol-cytochrome c reductase complex (complex III or cytochrome b-c1 complex) that is part of the mitochondrial respiratory chain. The b-c1 complex mediates electron transfer from ubiquinol to cytochrome c. Contributes to the generation of a proton gradient across the mitochondrial membrane that is then used for ATP synthesis.</text>
</comment>
<comment type="cofactor">
    <cofactor evidence="2">
        <name>heme b</name>
        <dbReference type="ChEBI" id="CHEBI:60344"/>
    </cofactor>
    <text evidence="2">Binds 2 heme b groups non-covalently.</text>
</comment>
<comment type="subunit">
    <text evidence="2">The cytochrome bc1 complex contains 11 subunits: 3 respiratory subunits (MT-CYB, CYC1 and UQCRFS1), 2 core proteins (UQCRC1 and UQCRC2) and 6 low-molecular weight proteins (UQCRH/QCR6, UQCRB/QCR7, UQCRQ/QCR8, UQCR10/QCR9, UQCR11/QCR10 and a cleavage product of UQCRFS1). This cytochrome bc1 complex then forms a dimer.</text>
</comment>
<comment type="subcellular location">
    <subcellularLocation>
        <location evidence="2">Mitochondrion inner membrane</location>
        <topology evidence="2">Multi-pass membrane protein</topology>
    </subcellularLocation>
</comment>
<comment type="miscellaneous">
    <text evidence="1">Heme 1 (or BL or b562) is low-potential and absorbs at about 562 nm, and heme 2 (or BH or b566) is high-potential and absorbs at about 566 nm.</text>
</comment>
<comment type="similarity">
    <text evidence="3 4">Belongs to the cytochrome b family.</text>
</comment>
<comment type="caution">
    <text evidence="2">The full-length protein contains only eight transmembrane helices, not nine as predicted by bioinformatics tools.</text>
</comment>
<sequence>MTNMRKNHPLMKIVNHSFIDLPTPSNISAWWNFGSLLGLCLGIQIITGLFLAMHYTSDTLTAFSSVTHICRDVNYGWIIRYLHANGASMFFICLFLHVGRGIYYGSYTYSETWNIGIFLLFAVMATAFMGYVLPWGQMSFWGATVITNLLSAIPYIGTDLVQWIWGGFSVDKATLTRFFAFHFILPFIIAALVMVHLLFLHETGSNNPTGIISDADKIPFHPYYTVKDALGFLLLTTLLLTLVLFSPDLLGDPDNYTPANPLNTPPHIKPEWYFLFAYAILRSIPNKLGGVLALVLSIAILAIMPLLHTSKQRSMMFRPISQTLFWILVADLLTLTWIGGQPVEHPFIIIGQLASFLYFLLILVLMPVCSLIENKLLKW</sequence>
<feature type="chain" id="PRO_0000061306" description="Cytochrome b">
    <location>
        <begin position="1"/>
        <end position="379"/>
    </location>
</feature>
<feature type="transmembrane region" description="Helical" evidence="2">
    <location>
        <begin position="33"/>
        <end position="53"/>
    </location>
</feature>
<feature type="transmembrane region" description="Helical" evidence="2">
    <location>
        <begin position="77"/>
        <end position="98"/>
    </location>
</feature>
<feature type="transmembrane region" description="Helical" evidence="2">
    <location>
        <begin position="113"/>
        <end position="133"/>
    </location>
</feature>
<feature type="transmembrane region" description="Helical" evidence="2">
    <location>
        <begin position="178"/>
        <end position="198"/>
    </location>
</feature>
<feature type="transmembrane region" description="Helical" evidence="2">
    <location>
        <begin position="226"/>
        <end position="246"/>
    </location>
</feature>
<feature type="transmembrane region" description="Helical" evidence="2">
    <location>
        <begin position="288"/>
        <end position="308"/>
    </location>
</feature>
<feature type="transmembrane region" description="Helical" evidence="2">
    <location>
        <begin position="320"/>
        <end position="340"/>
    </location>
</feature>
<feature type="transmembrane region" description="Helical" evidence="2">
    <location>
        <begin position="347"/>
        <end position="367"/>
    </location>
</feature>
<feature type="binding site" description="axial binding residue" evidence="2">
    <location>
        <position position="83"/>
    </location>
    <ligand>
        <name>heme b</name>
        <dbReference type="ChEBI" id="CHEBI:60344"/>
        <label>b562</label>
    </ligand>
    <ligandPart>
        <name>Fe</name>
        <dbReference type="ChEBI" id="CHEBI:18248"/>
    </ligandPart>
</feature>
<feature type="binding site" description="axial binding residue" evidence="2">
    <location>
        <position position="97"/>
    </location>
    <ligand>
        <name>heme b</name>
        <dbReference type="ChEBI" id="CHEBI:60344"/>
        <label>b566</label>
    </ligand>
    <ligandPart>
        <name>Fe</name>
        <dbReference type="ChEBI" id="CHEBI:18248"/>
    </ligandPart>
</feature>
<feature type="binding site" description="axial binding residue" evidence="2">
    <location>
        <position position="182"/>
    </location>
    <ligand>
        <name>heme b</name>
        <dbReference type="ChEBI" id="CHEBI:60344"/>
        <label>b562</label>
    </ligand>
    <ligandPart>
        <name>Fe</name>
        <dbReference type="ChEBI" id="CHEBI:18248"/>
    </ligandPart>
</feature>
<feature type="binding site" description="axial binding residue" evidence="2">
    <location>
        <position position="196"/>
    </location>
    <ligand>
        <name>heme b</name>
        <dbReference type="ChEBI" id="CHEBI:60344"/>
        <label>b566</label>
    </ligand>
    <ligandPart>
        <name>Fe</name>
        <dbReference type="ChEBI" id="CHEBI:18248"/>
    </ligandPart>
</feature>
<feature type="binding site" evidence="2">
    <location>
        <position position="201"/>
    </location>
    <ligand>
        <name>a ubiquinone</name>
        <dbReference type="ChEBI" id="CHEBI:16389"/>
    </ligand>
</feature>
<geneLocation type="mitochondrion"/>
<dbReference type="EMBL" id="AF272989">
    <property type="protein sequence ID" value="AAG00184.1"/>
    <property type="molecule type" value="Genomic_DNA"/>
</dbReference>
<dbReference type="SMR" id="Q9GBZ4"/>
<dbReference type="GO" id="GO:0005743">
    <property type="term" value="C:mitochondrial inner membrane"/>
    <property type="evidence" value="ECO:0007669"/>
    <property type="project" value="UniProtKB-SubCell"/>
</dbReference>
<dbReference type="GO" id="GO:0045275">
    <property type="term" value="C:respiratory chain complex III"/>
    <property type="evidence" value="ECO:0007669"/>
    <property type="project" value="InterPro"/>
</dbReference>
<dbReference type="GO" id="GO:0046872">
    <property type="term" value="F:metal ion binding"/>
    <property type="evidence" value="ECO:0007669"/>
    <property type="project" value="UniProtKB-KW"/>
</dbReference>
<dbReference type="GO" id="GO:0008121">
    <property type="term" value="F:ubiquinol-cytochrome-c reductase activity"/>
    <property type="evidence" value="ECO:0007669"/>
    <property type="project" value="InterPro"/>
</dbReference>
<dbReference type="GO" id="GO:0006122">
    <property type="term" value="P:mitochondrial electron transport, ubiquinol to cytochrome c"/>
    <property type="evidence" value="ECO:0007669"/>
    <property type="project" value="TreeGrafter"/>
</dbReference>
<dbReference type="CDD" id="cd00290">
    <property type="entry name" value="cytochrome_b_C"/>
    <property type="match status" value="1"/>
</dbReference>
<dbReference type="CDD" id="cd00284">
    <property type="entry name" value="Cytochrome_b_N"/>
    <property type="match status" value="1"/>
</dbReference>
<dbReference type="FunFam" id="1.20.810.10:FF:000002">
    <property type="entry name" value="Cytochrome b"/>
    <property type="match status" value="1"/>
</dbReference>
<dbReference type="Gene3D" id="1.20.810.10">
    <property type="entry name" value="Cytochrome Bc1 Complex, Chain C"/>
    <property type="match status" value="1"/>
</dbReference>
<dbReference type="InterPro" id="IPR005798">
    <property type="entry name" value="Cyt_b/b6_C"/>
</dbReference>
<dbReference type="InterPro" id="IPR036150">
    <property type="entry name" value="Cyt_b/b6_C_sf"/>
</dbReference>
<dbReference type="InterPro" id="IPR005797">
    <property type="entry name" value="Cyt_b/b6_N"/>
</dbReference>
<dbReference type="InterPro" id="IPR027387">
    <property type="entry name" value="Cytb/b6-like_sf"/>
</dbReference>
<dbReference type="InterPro" id="IPR030689">
    <property type="entry name" value="Cytochrome_b"/>
</dbReference>
<dbReference type="InterPro" id="IPR048260">
    <property type="entry name" value="Cytochrome_b_C_euk/bac"/>
</dbReference>
<dbReference type="InterPro" id="IPR048259">
    <property type="entry name" value="Cytochrome_b_N_euk/bac"/>
</dbReference>
<dbReference type="InterPro" id="IPR016174">
    <property type="entry name" value="Di-haem_cyt_TM"/>
</dbReference>
<dbReference type="PANTHER" id="PTHR19271">
    <property type="entry name" value="CYTOCHROME B"/>
    <property type="match status" value="1"/>
</dbReference>
<dbReference type="PANTHER" id="PTHR19271:SF16">
    <property type="entry name" value="CYTOCHROME B"/>
    <property type="match status" value="1"/>
</dbReference>
<dbReference type="Pfam" id="PF00032">
    <property type="entry name" value="Cytochrom_B_C"/>
    <property type="match status" value="1"/>
</dbReference>
<dbReference type="Pfam" id="PF00033">
    <property type="entry name" value="Cytochrome_B"/>
    <property type="match status" value="1"/>
</dbReference>
<dbReference type="PIRSF" id="PIRSF038885">
    <property type="entry name" value="COB"/>
    <property type="match status" value="1"/>
</dbReference>
<dbReference type="SUPFAM" id="SSF81648">
    <property type="entry name" value="a domain/subunit of cytochrome bc1 complex (Ubiquinol-cytochrome c reductase)"/>
    <property type="match status" value="1"/>
</dbReference>
<dbReference type="SUPFAM" id="SSF81342">
    <property type="entry name" value="Transmembrane di-heme cytochromes"/>
    <property type="match status" value="1"/>
</dbReference>
<dbReference type="PROSITE" id="PS51003">
    <property type="entry name" value="CYTB_CTER"/>
    <property type="match status" value="1"/>
</dbReference>
<dbReference type="PROSITE" id="PS51002">
    <property type="entry name" value="CYTB_NTER"/>
    <property type="match status" value="1"/>
</dbReference>
<protein>
    <recommendedName>
        <fullName>Cytochrome b</fullName>
    </recommendedName>
    <alternativeName>
        <fullName>Complex III subunit 3</fullName>
    </alternativeName>
    <alternativeName>
        <fullName>Complex III subunit III</fullName>
    </alternativeName>
    <alternativeName>
        <fullName>Cytochrome b-c1 complex subunit 3</fullName>
    </alternativeName>
    <alternativeName>
        <fullName>Ubiquinol-cytochrome-c reductase complex cytochrome b subunit</fullName>
    </alternativeName>
</protein>